<protein>
    <recommendedName>
        <fullName>Elongation factor Tu, mitochondrial</fullName>
    </recommendedName>
</protein>
<accession>Q9ZT91</accession>
<accession>Q39206</accession>
<gene>
    <name type="primary">TUFA</name>
    <name type="ordered locus">At4g02930</name>
    <name type="ORF">T4I9.19</name>
    <name type="ORF">T5J8.25</name>
</gene>
<organism evidence="8">
    <name type="scientific">Arabidopsis thaliana</name>
    <name type="common">Mouse-ear cress</name>
    <dbReference type="NCBI Taxonomy" id="3702"/>
    <lineage>
        <taxon>Eukaryota</taxon>
        <taxon>Viridiplantae</taxon>
        <taxon>Streptophyta</taxon>
        <taxon>Embryophyta</taxon>
        <taxon>Tracheophyta</taxon>
        <taxon>Spermatophyta</taxon>
        <taxon>Magnoliopsida</taxon>
        <taxon>eudicotyledons</taxon>
        <taxon>Gunneridae</taxon>
        <taxon>Pentapetalae</taxon>
        <taxon>rosids</taxon>
        <taxon>malvids</taxon>
        <taxon>Brassicales</taxon>
        <taxon>Brassicaceae</taxon>
        <taxon>Camelineae</taxon>
        <taxon>Arabidopsis</taxon>
    </lineage>
</organism>
<feature type="transit peptide" description="Mitochondrion" evidence="4">
    <location>
        <begin position="1"/>
        <end position="51"/>
    </location>
</feature>
<feature type="chain" id="PRO_0000007466" description="Elongation factor Tu, mitochondrial">
    <location>
        <begin position="52"/>
        <end position="454"/>
    </location>
</feature>
<feature type="domain" description="tr-type G">
    <location>
        <begin position="65"/>
        <end position="261"/>
    </location>
</feature>
<feature type="region of interest" description="G1" evidence="1">
    <location>
        <begin position="74"/>
        <end position="81"/>
    </location>
</feature>
<feature type="region of interest" description="G2" evidence="1">
    <location>
        <begin position="115"/>
        <end position="119"/>
    </location>
</feature>
<feature type="region of interest" description="G3" evidence="1">
    <location>
        <begin position="136"/>
        <end position="139"/>
    </location>
</feature>
<feature type="region of interest" description="G4" evidence="1">
    <location>
        <begin position="191"/>
        <end position="194"/>
    </location>
</feature>
<feature type="region of interest" description="G5" evidence="1">
    <location>
        <begin position="229"/>
        <end position="231"/>
    </location>
</feature>
<feature type="binding site" evidence="1">
    <location>
        <begin position="74"/>
        <end position="81"/>
    </location>
    <ligand>
        <name>GTP</name>
        <dbReference type="ChEBI" id="CHEBI:37565"/>
    </ligand>
</feature>
<feature type="binding site" evidence="1">
    <location>
        <begin position="136"/>
        <end position="140"/>
    </location>
    <ligand>
        <name>GTP</name>
        <dbReference type="ChEBI" id="CHEBI:37565"/>
    </ligand>
</feature>
<feature type="binding site" evidence="1">
    <location>
        <begin position="191"/>
        <end position="194"/>
    </location>
    <ligand>
        <name>GTP</name>
        <dbReference type="ChEBI" id="CHEBI:37565"/>
    </ligand>
</feature>
<feature type="modified residue" description="Phosphothreonine" evidence="2">
    <location>
        <position position="82"/>
    </location>
</feature>
<feature type="sequence conflict" description="In Ref. 1; CAA61511." evidence="7" ref="1">
    <original>MASVVLRNPS</original>
    <variation>MEEPVDREDIDLRVSSTDIGWNEFAAA</variation>
    <location>
        <begin position="1"/>
        <end position="10"/>
    </location>
</feature>
<feature type="sequence conflict" description="In Ref. 1; CAA61511." evidence="7" ref="1">
    <original>VPL</original>
    <variation>CST</variation>
    <location>
        <begin position="310"/>
        <end position="312"/>
    </location>
</feature>
<sequence>MASVVLRNPSSKRLVPFSSQIYSRCGASVTSSYSISHSIGGDDLSSSTFGTSSFWRSMATFTRNKPHVNVGTIGHVDHGKTTLTAAITKVLAEEGKAKAIAFDEIDKAPEEKKRGITIATAHVEYETAKRHYAHVDCPGHADYVKNMITGAAQMDGGILVVSGPDGPMPQTKEHILLARQVGVPSLVCFLNKVDVVDDPELLELVEMELRELLSFYKFPGDDIPIIRGSALSALQGTNDEIGRQAILKLMDAVDEYIPDPVRVLDKPFLMPIEDVFSIQGRGTVATGRIEQGVIKVGEEVEILGLREGGVPLKSTVTGVEMFKKILDNGQAGDNVGLLLRGLKREDIQRGMVIAKPGSCKTYKKFEAEIYVLTKDEGGRHTAFFSNYRPQFYLRTADITGKVELPENVKMVMPGDNVTAVFELIMPVPLETGQRFALREGGRTVGAGVVSKVMT</sequence>
<proteinExistence type="evidence at protein level"/>
<evidence type="ECO:0000250" key="1"/>
<evidence type="ECO:0000250" key="2">
    <source>
        <dbReference type="UniProtKB" id="P17745"/>
    </source>
</evidence>
<evidence type="ECO:0000250" key="3">
    <source>
        <dbReference type="UniProtKB" id="P42473"/>
    </source>
</evidence>
<evidence type="ECO:0000255" key="4"/>
<evidence type="ECO:0000269" key="5">
    <source>
    </source>
</evidence>
<evidence type="ECO:0000269" key="6">
    <source>
    </source>
</evidence>
<evidence type="ECO:0000305" key="7"/>
<evidence type="ECO:0000312" key="8">
    <source>
        <dbReference type="EMBL" id="CAB77778.1"/>
    </source>
</evidence>
<reference key="1">
    <citation type="journal article" date="1995" name="Plant Mol. Biol.">
        <title>Isolation, expression, and evolution of the gene encoding mitochondrial elongation factor Tu in Arabidopsis thaliana.</title>
        <authorList>
            <person name="Kuhlman P."/>
            <person name="Palmer J.D."/>
        </authorList>
    </citation>
    <scope>NUCLEOTIDE SEQUENCE [MRNA]</scope>
    <source>
        <strain>cv. Columbia</strain>
    </source>
</reference>
<reference evidence="7" key="2">
    <citation type="journal article" date="1999" name="Nature">
        <title>Sequence and analysis of chromosome 4 of the plant Arabidopsis thaliana.</title>
        <authorList>
            <person name="Mayer K.F.X."/>
            <person name="Schueller C."/>
            <person name="Wambutt R."/>
            <person name="Murphy G."/>
            <person name="Volckaert G."/>
            <person name="Pohl T."/>
            <person name="Duesterhoeft A."/>
            <person name="Stiekema W."/>
            <person name="Entian K.-D."/>
            <person name="Terryn N."/>
            <person name="Harris B."/>
            <person name="Ansorge W."/>
            <person name="Brandt P."/>
            <person name="Grivell L.A."/>
            <person name="Rieger M."/>
            <person name="Weichselgartner M."/>
            <person name="de Simone V."/>
            <person name="Obermaier B."/>
            <person name="Mache R."/>
            <person name="Mueller M."/>
            <person name="Kreis M."/>
            <person name="Delseny M."/>
            <person name="Puigdomenech P."/>
            <person name="Watson M."/>
            <person name="Schmidtheini T."/>
            <person name="Reichert B."/>
            <person name="Portetelle D."/>
            <person name="Perez-Alonso M."/>
            <person name="Boutry M."/>
            <person name="Bancroft I."/>
            <person name="Vos P."/>
            <person name="Hoheisel J."/>
            <person name="Zimmermann W."/>
            <person name="Wedler H."/>
            <person name="Ridley P."/>
            <person name="Langham S.-A."/>
            <person name="McCullagh B."/>
            <person name="Bilham L."/>
            <person name="Robben J."/>
            <person name="van der Schueren J."/>
            <person name="Grymonprez B."/>
            <person name="Chuang Y.-J."/>
            <person name="Vandenbussche F."/>
            <person name="Braeken M."/>
            <person name="Weltjens I."/>
            <person name="Voet M."/>
            <person name="Bastiaens I."/>
            <person name="Aert R."/>
            <person name="Defoor E."/>
            <person name="Weitzenegger T."/>
            <person name="Bothe G."/>
            <person name="Ramsperger U."/>
            <person name="Hilbert H."/>
            <person name="Braun M."/>
            <person name="Holzer E."/>
            <person name="Brandt A."/>
            <person name="Peters S."/>
            <person name="van Staveren M."/>
            <person name="Dirkse W."/>
            <person name="Mooijman P."/>
            <person name="Klein Lankhorst R."/>
            <person name="Rose M."/>
            <person name="Hauf J."/>
            <person name="Koetter P."/>
            <person name="Berneiser S."/>
            <person name="Hempel S."/>
            <person name="Feldpausch M."/>
            <person name="Lamberth S."/>
            <person name="Van den Daele H."/>
            <person name="De Keyser A."/>
            <person name="Buysshaert C."/>
            <person name="Gielen J."/>
            <person name="Villarroel R."/>
            <person name="De Clercq R."/>
            <person name="van Montagu M."/>
            <person name="Rogers J."/>
            <person name="Cronin A."/>
            <person name="Quail M.A."/>
            <person name="Bray-Allen S."/>
            <person name="Clark L."/>
            <person name="Doggett J."/>
            <person name="Hall S."/>
            <person name="Kay M."/>
            <person name="Lennard N."/>
            <person name="McLay K."/>
            <person name="Mayes R."/>
            <person name="Pettett A."/>
            <person name="Rajandream M.A."/>
            <person name="Lyne M."/>
            <person name="Benes V."/>
            <person name="Rechmann S."/>
            <person name="Borkova D."/>
            <person name="Bloecker H."/>
            <person name="Scharfe M."/>
            <person name="Grimm M."/>
            <person name="Loehnert T.-H."/>
            <person name="Dose S."/>
            <person name="de Haan M."/>
            <person name="Maarse A.C."/>
            <person name="Schaefer M."/>
            <person name="Mueller-Auer S."/>
            <person name="Gabel C."/>
            <person name="Fuchs M."/>
            <person name="Fartmann B."/>
            <person name="Granderath K."/>
            <person name="Dauner D."/>
            <person name="Herzl A."/>
            <person name="Neumann S."/>
            <person name="Argiriou A."/>
            <person name="Vitale D."/>
            <person name="Liguori R."/>
            <person name="Piravandi E."/>
            <person name="Massenet O."/>
            <person name="Quigley F."/>
            <person name="Clabauld G."/>
            <person name="Muendlein A."/>
            <person name="Felber R."/>
            <person name="Schnabl S."/>
            <person name="Hiller R."/>
            <person name="Schmidt W."/>
            <person name="Lecharny A."/>
            <person name="Aubourg S."/>
            <person name="Chefdor F."/>
            <person name="Cooke R."/>
            <person name="Berger C."/>
            <person name="Monfort A."/>
            <person name="Casacuberta E."/>
            <person name="Gibbons T."/>
            <person name="Weber N."/>
            <person name="Vandenbol M."/>
            <person name="Bargues M."/>
            <person name="Terol J."/>
            <person name="Torres A."/>
            <person name="Perez-Perez A."/>
            <person name="Purnelle B."/>
            <person name="Bent E."/>
            <person name="Johnson S."/>
            <person name="Tacon D."/>
            <person name="Jesse T."/>
            <person name="Heijnen L."/>
            <person name="Schwarz S."/>
            <person name="Scholler P."/>
            <person name="Heber S."/>
            <person name="Francs P."/>
            <person name="Bielke C."/>
            <person name="Frishman D."/>
            <person name="Haase D."/>
            <person name="Lemcke K."/>
            <person name="Mewes H.-W."/>
            <person name="Stocker S."/>
            <person name="Zaccaria P."/>
            <person name="Bevan M."/>
            <person name="Wilson R.K."/>
            <person name="de la Bastide M."/>
            <person name="Habermann K."/>
            <person name="Parnell L."/>
            <person name="Dedhia N."/>
            <person name="Gnoj L."/>
            <person name="Schutz K."/>
            <person name="Huang E."/>
            <person name="Spiegel L."/>
            <person name="Sekhon M."/>
            <person name="Murray J."/>
            <person name="Sheet P."/>
            <person name="Cordes M."/>
            <person name="Abu-Threideh J."/>
            <person name="Stoneking T."/>
            <person name="Kalicki J."/>
            <person name="Graves T."/>
            <person name="Harmon G."/>
            <person name="Edwards J."/>
            <person name="Latreille P."/>
            <person name="Courtney L."/>
            <person name="Cloud J."/>
            <person name="Abbott A."/>
            <person name="Scott K."/>
            <person name="Johnson D."/>
            <person name="Minx P."/>
            <person name="Bentley D."/>
            <person name="Fulton B."/>
            <person name="Miller N."/>
            <person name="Greco T."/>
            <person name="Kemp K."/>
            <person name="Kramer J."/>
            <person name="Fulton L."/>
            <person name="Mardis E."/>
            <person name="Dante M."/>
            <person name="Pepin K."/>
            <person name="Hillier L.W."/>
            <person name="Nelson J."/>
            <person name="Spieth J."/>
            <person name="Ryan E."/>
            <person name="Andrews S."/>
            <person name="Geisel C."/>
            <person name="Layman D."/>
            <person name="Du H."/>
            <person name="Ali J."/>
            <person name="Berghoff A."/>
            <person name="Jones K."/>
            <person name="Drone K."/>
            <person name="Cotton M."/>
            <person name="Joshu C."/>
            <person name="Antonoiu B."/>
            <person name="Zidanic M."/>
            <person name="Strong C."/>
            <person name="Sun H."/>
            <person name="Lamar B."/>
            <person name="Yordan C."/>
            <person name="Ma P."/>
            <person name="Zhong J."/>
            <person name="Preston R."/>
            <person name="Vil D."/>
            <person name="Shekher M."/>
            <person name="Matero A."/>
            <person name="Shah R."/>
            <person name="Swaby I.K."/>
            <person name="O'Shaughnessy A."/>
            <person name="Rodriguez M."/>
            <person name="Hoffman J."/>
            <person name="Till S."/>
            <person name="Granat S."/>
            <person name="Shohdy N."/>
            <person name="Hasegawa A."/>
            <person name="Hameed A."/>
            <person name="Lodhi M."/>
            <person name="Johnson A."/>
            <person name="Chen E."/>
            <person name="Marra M.A."/>
            <person name="Martienssen R."/>
            <person name="McCombie W.R."/>
        </authorList>
    </citation>
    <scope>NUCLEOTIDE SEQUENCE [LARGE SCALE GENOMIC DNA]</scope>
    <source>
        <strain>cv. Columbia</strain>
    </source>
</reference>
<reference evidence="7 8" key="3">
    <citation type="journal article" date="2017" name="Plant J.">
        <title>Araport11: a complete reannotation of the Arabidopsis thaliana reference genome.</title>
        <authorList>
            <person name="Cheng C.Y."/>
            <person name="Krishnakumar V."/>
            <person name="Chan A.P."/>
            <person name="Thibaud-Nissen F."/>
            <person name="Schobel S."/>
            <person name="Town C.D."/>
        </authorList>
    </citation>
    <scope>GENOME REANNOTATION</scope>
    <source>
        <strain>cv. Columbia</strain>
    </source>
</reference>
<reference key="4">
    <citation type="journal article" date="2003" name="Science">
        <title>Empirical analysis of transcriptional activity in the Arabidopsis genome.</title>
        <authorList>
            <person name="Yamada K."/>
            <person name="Lim J."/>
            <person name="Dale J.M."/>
            <person name="Chen H."/>
            <person name="Shinn P."/>
            <person name="Palm C.J."/>
            <person name="Southwick A.M."/>
            <person name="Wu H.C."/>
            <person name="Kim C.J."/>
            <person name="Nguyen M."/>
            <person name="Pham P.K."/>
            <person name="Cheuk R.F."/>
            <person name="Karlin-Newmann G."/>
            <person name="Liu S.X."/>
            <person name="Lam B."/>
            <person name="Sakano H."/>
            <person name="Wu T."/>
            <person name="Yu G."/>
            <person name="Miranda M."/>
            <person name="Quach H.L."/>
            <person name="Tripp M."/>
            <person name="Chang C.H."/>
            <person name="Lee J.M."/>
            <person name="Toriumi M.J."/>
            <person name="Chan M.M."/>
            <person name="Tang C.C."/>
            <person name="Onodera C.S."/>
            <person name="Deng J.M."/>
            <person name="Akiyama K."/>
            <person name="Ansari Y."/>
            <person name="Arakawa T."/>
            <person name="Banh J."/>
            <person name="Banno F."/>
            <person name="Bowser L."/>
            <person name="Brooks S.Y."/>
            <person name="Carninci P."/>
            <person name="Chao Q."/>
            <person name="Choy N."/>
            <person name="Enju A."/>
            <person name="Goldsmith A.D."/>
            <person name="Gurjal M."/>
            <person name="Hansen N.F."/>
            <person name="Hayashizaki Y."/>
            <person name="Johnson-Hopson C."/>
            <person name="Hsuan V.W."/>
            <person name="Iida K."/>
            <person name="Karnes M."/>
            <person name="Khan S."/>
            <person name="Koesema E."/>
            <person name="Ishida J."/>
            <person name="Jiang P.X."/>
            <person name="Jones T."/>
            <person name="Kawai J."/>
            <person name="Kamiya A."/>
            <person name="Meyers C."/>
            <person name="Nakajima M."/>
            <person name="Narusaka M."/>
            <person name="Seki M."/>
            <person name="Sakurai T."/>
            <person name="Satou M."/>
            <person name="Tamse R."/>
            <person name="Vaysberg M."/>
            <person name="Wallender E.K."/>
            <person name="Wong C."/>
            <person name="Yamamura Y."/>
            <person name="Yuan S."/>
            <person name="Shinozaki K."/>
            <person name="Davis R.W."/>
            <person name="Theologis A."/>
            <person name="Ecker J.R."/>
        </authorList>
    </citation>
    <scope>NUCLEOTIDE SEQUENCE [LARGE SCALE MRNA]</scope>
    <source>
        <strain>cv. Columbia</strain>
    </source>
</reference>
<reference key="5">
    <citation type="journal article" date="1996" name="Plant J.">
        <title>Further progress towards a catalogue of all Arabidopsis genes: analysis of a set of 5000 non-redundant ESTs.</title>
        <authorList>
            <person name="Cooke R."/>
            <person name="Raynal M."/>
            <person name="Laudie M."/>
            <person name="Grellet F."/>
            <person name="Delseny M."/>
            <person name="Morris P.-C."/>
            <person name="Guerrier D."/>
            <person name="Giraudat J."/>
            <person name="Quigley F."/>
            <person name="Clabault G."/>
            <person name="Li Y.-F."/>
            <person name="Mache R."/>
            <person name="Krivitzky M."/>
            <person name="Gy I.J.-J."/>
            <person name="Kreis M."/>
            <person name="Lecharny A."/>
            <person name="Parmentier Y."/>
            <person name="Marbach J."/>
            <person name="Fleck J."/>
            <person name="Clement B."/>
            <person name="Philipps G."/>
            <person name="Herve C."/>
            <person name="Bardet C."/>
            <person name="Tremousaygue D."/>
            <person name="Lescure B."/>
            <person name="Lacomme C."/>
            <person name="Roby D."/>
            <person name="Jourjon M.-F."/>
            <person name="Chabrier P."/>
            <person name="Charpenteau J.-L."/>
            <person name="Desprez T."/>
            <person name="Amselem J."/>
            <person name="Chiapello H."/>
            <person name="Hoefte H."/>
        </authorList>
    </citation>
    <scope>NUCLEOTIDE SEQUENCE [LARGE SCALE MRNA] OF 342-454</scope>
    <source>
        <strain>cv. Columbia</strain>
    </source>
</reference>
<reference evidence="7" key="6">
    <citation type="journal article" date="2001" name="Plant Physiol.">
        <title>Proteomic approach to identify novel mitochondrial proteins in Arabidopsis.</title>
        <authorList>
            <person name="Kruft V."/>
            <person name="Eubel H."/>
            <person name="Jaensch L."/>
            <person name="Werhahn W."/>
            <person name="Braun H.-P."/>
        </authorList>
    </citation>
    <scope>PROTEIN SEQUENCE OF 296-306</scope>
    <scope>SUBCELLULAR LOCATION</scope>
    <source>
        <tissue>Leaf</tissue>
        <tissue>Stem</tissue>
    </source>
</reference>
<reference key="7">
    <citation type="journal article" date="2004" name="Plant Cell">
        <title>Experimental analysis of the Arabidopsis mitochondrial proteome highlights signaling and regulatory components, provides assessment of targeting prediction programs, and indicates plant-specific mitochondrial proteins.</title>
        <authorList>
            <person name="Heazlewood J.L."/>
            <person name="Tonti-Filippini J.S."/>
            <person name="Gout A.M."/>
            <person name="Day D.A."/>
            <person name="Whelan J."/>
            <person name="Millar A.H."/>
        </authorList>
    </citation>
    <scope>IDENTIFICATION BY MASS SPECTROMETRY</scope>
    <scope>SUBCELLULAR LOCATION [LARGE SCALE ANALYSIS]</scope>
    <source>
        <strain>cv. Landsberg erecta</strain>
    </source>
</reference>
<reference key="8">
    <citation type="journal article" date="2007" name="Mol. Cell. Proteomics">
        <title>Multidimensional protein identification technology (MudPIT) analysis of ubiquitinated proteins in plants.</title>
        <authorList>
            <person name="Maor R."/>
            <person name="Jones A."/>
            <person name="Nuehse T.S."/>
            <person name="Studholme D.J."/>
            <person name="Peck S.C."/>
            <person name="Shirasu K."/>
        </authorList>
    </citation>
    <scope>IDENTIFICATION BY MASS SPECTROMETRY [LARGE SCALE ANALYSIS]</scope>
    <source>
        <strain>cv. Landsberg erecta</strain>
    </source>
</reference>
<name>EFTM_ARATH</name>
<comment type="function">
    <text evidence="3">This protein promotes the GTP-dependent binding of aminoacyl-tRNA to the A-site of ribosomes during protein biosynthesis.</text>
</comment>
<comment type="subcellular location">
    <subcellularLocation>
        <location evidence="5 6">Mitochondrion</location>
    </subcellularLocation>
</comment>
<comment type="similarity">
    <text evidence="7">Belongs to the TRAFAC class translation factor GTPase superfamily. Classic translation factor GTPase family. EF-Tu/EF-1A subfamily.</text>
</comment>
<keyword id="KW-0903">Direct protein sequencing</keyword>
<keyword id="KW-0251">Elongation factor</keyword>
<keyword id="KW-0342">GTP-binding</keyword>
<keyword id="KW-0496">Mitochondrion</keyword>
<keyword id="KW-0547">Nucleotide-binding</keyword>
<keyword id="KW-0597">Phosphoprotein</keyword>
<keyword id="KW-0648">Protein biosynthesis</keyword>
<keyword id="KW-1185">Reference proteome</keyword>
<keyword id="KW-0809">Transit peptide</keyword>
<dbReference type="EMBL" id="X89227">
    <property type="protein sequence ID" value="CAA61511.1"/>
    <property type="molecule type" value="mRNA"/>
</dbReference>
<dbReference type="EMBL" id="AC004044">
    <property type="protein sequence ID" value="AAD15337.1"/>
    <property type="molecule type" value="Genomic_DNA"/>
</dbReference>
<dbReference type="EMBL" id="AF069442">
    <property type="protein sequence ID" value="AAC79113.1"/>
    <property type="molecule type" value="Genomic_DNA"/>
</dbReference>
<dbReference type="EMBL" id="AL161495">
    <property type="protein sequence ID" value="CAB77778.1"/>
    <property type="molecule type" value="Genomic_DNA"/>
</dbReference>
<dbReference type="EMBL" id="CP002687">
    <property type="protein sequence ID" value="AEE82252.1"/>
    <property type="molecule type" value="Genomic_DNA"/>
</dbReference>
<dbReference type="EMBL" id="AY136421">
    <property type="protein sequence ID" value="AAM97087.1"/>
    <property type="molecule type" value="mRNA"/>
</dbReference>
<dbReference type="EMBL" id="BT008755">
    <property type="protein sequence ID" value="AAP49517.1"/>
    <property type="molecule type" value="mRNA"/>
</dbReference>
<dbReference type="EMBL" id="F14375">
    <property type="protein sequence ID" value="CAA23078.1"/>
    <property type="molecule type" value="mRNA"/>
</dbReference>
<dbReference type="PIR" id="T01400">
    <property type="entry name" value="T01400"/>
</dbReference>
<dbReference type="RefSeq" id="NP_192202.1">
    <property type="nucleotide sequence ID" value="NM_116527.4"/>
</dbReference>
<dbReference type="SMR" id="Q9ZT91"/>
<dbReference type="BioGRID" id="13423">
    <property type="interactions" value="7"/>
</dbReference>
<dbReference type="FunCoup" id="Q9ZT91">
    <property type="interactions" value="3218"/>
</dbReference>
<dbReference type="IntAct" id="Q9ZT91">
    <property type="interactions" value="1"/>
</dbReference>
<dbReference type="STRING" id="3702.Q9ZT91"/>
<dbReference type="MetOSite" id="Q9ZT91"/>
<dbReference type="PaxDb" id="3702-AT4G02930.1"/>
<dbReference type="ProteomicsDB" id="220738"/>
<dbReference type="EnsemblPlants" id="AT4G02930.1">
    <property type="protein sequence ID" value="AT4G02930.1"/>
    <property type="gene ID" value="AT4G02930"/>
</dbReference>
<dbReference type="GeneID" id="828134"/>
<dbReference type="Gramene" id="AT4G02930.1">
    <property type="protein sequence ID" value="AT4G02930.1"/>
    <property type="gene ID" value="AT4G02930"/>
</dbReference>
<dbReference type="KEGG" id="ath:AT4G02930"/>
<dbReference type="Araport" id="AT4G02930"/>
<dbReference type="TAIR" id="AT4G02930"/>
<dbReference type="eggNOG" id="KOG0460">
    <property type="taxonomic scope" value="Eukaryota"/>
</dbReference>
<dbReference type="HOGENOM" id="CLU_007265_0_0_1"/>
<dbReference type="InParanoid" id="Q9ZT91"/>
<dbReference type="OMA" id="RYRHIDW"/>
<dbReference type="OrthoDB" id="1072882at2759"/>
<dbReference type="PhylomeDB" id="Q9ZT91"/>
<dbReference type="PRO" id="PR:Q9ZT91"/>
<dbReference type="Proteomes" id="UP000006548">
    <property type="component" value="Chromosome 4"/>
</dbReference>
<dbReference type="ExpressionAtlas" id="Q9ZT91">
    <property type="expression patterns" value="baseline and differential"/>
</dbReference>
<dbReference type="GO" id="GO:0005829">
    <property type="term" value="C:cytosol"/>
    <property type="evidence" value="ECO:0007005"/>
    <property type="project" value="TAIR"/>
</dbReference>
<dbReference type="GO" id="GO:0005739">
    <property type="term" value="C:mitochondrion"/>
    <property type="evidence" value="ECO:0007005"/>
    <property type="project" value="TAIR"/>
</dbReference>
<dbReference type="GO" id="GO:0009505">
    <property type="term" value="C:plant-type cell wall"/>
    <property type="evidence" value="ECO:0007005"/>
    <property type="project" value="TAIR"/>
</dbReference>
<dbReference type="GO" id="GO:0005524">
    <property type="term" value="F:ATP binding"/>
    <property type="evidence" value="ECO:0007005"/>
    <property type="project" value="TAIR"/>
</dbReference>
<dbReference type="GO" id="GO:0050897">
    <property type="term" value="F:cobalt ion binding"/>
    <property type="evidence" value="ECO:0007005"/>
    <property type="project" value="TAIR"/>
</dbReference>
<dbReference type="GO" id="GO:0005525">
    <property type="term" value="F:GTP binding"/>
    <property type="evidence" value="ECO:0007669"/>
    <property type="project" value="UniProtKB-KW"/>
</dbReference>
<dbReference type="GO" id="GO:0003924">
    <property type="term" value="F:GTPase activity"/>
    <property type="evidence" value="ECO:0007669"/>
    <property type="project" value="InterPro"/>
</dbReference>
<dbReference type="GO" id="GO:0003746">
    <property type="term" value="F:translation elongation factor activity"/>
    <property type="evidence" value="ECO:0007669"/>
    <property type="project" value="UniProtKB-KW"/>
</dbReference>
<dbReference type="GO" id="GO:0008270">
    <property type="term" value="F:zinc ion binding"/>
    <property type="evidence" value="ECO:0007005"/>
    <property type="project" value="TAIR"/>
</dbReference>
<dbReference type="GO" id="GO:0046686">
    <property type="term" value="P:response to cadmium ion"/>
    <property type="evidence" value="ECO:0000270"/>
    <property type="project" value="TAIR"/>
</dbReference>
<dbReference type="CDD" id="cd01884">
    <property type="entry name" value="EF_Tu"/>
    <property type="match status" value="1"/>
</dbReference>
<dbReference type="CDD" id="cd03697">
    <property type="entry name" value="EFTU_II"/>
    <property type="match status" value="1"/>
</dbReference>
<dbReference type="CDD" id="cd03707">
    <property type="entry name" value="EFTU_III"/>
    <property type="match status" value="1"/>
</dbReference>
<dbReference type="FunFam" id="2.40.30.10:FF:000001">
    <property type="entry name" value="Elongation factor Tu"/>
    <property type="match status" value="1"/>
</dbReference>
<dbReference type="FunFam" id="3.40.50.300:FF:000003">
    <property type="entry name" value="Elongation factor Tu"/>
    <property type="match status" value="1"/>
</dbReference>
<dbReference type="Gene3D" id="3.40.50.300">
    <property type="entry name" value="P-loop containing nucleotide triphosphate hydrolases"/>
    <property type="match status" value="1"/>
</dbReference>
<dbReference type="Gene3D" id="2.40.30.10">
    <property type="entry name" value="Translation factors"/>
    <property type="match status" value="2"/>
</dbReference>
<dbReference type="HAMAP" id="MF_00118_B">
    <property type="entry name" value="EF_Tu_B"/>
    <property type="match status" value="1"/>
</dbReference>
<dbReference type="InterPro" id="IPR041709">
    <property type="entry name" value="EF-Tu_GTP-bd"/>
</dbReference>
<dbReference type="InterPro" id="IPR050055">
    <property type="entry name" value="EF-Tu_GTPase"/>
</dbReference>
<dbReference type="InterPro" id="IPR004161">
    <property type="entry name" value="EFTu-like_2"/>
</dbReference>
<dbReference type="InterPro" id="IPR033720">
    <property type="entry name" value="EFTU_2"/>
</dbReference>
<dbReference type="InterPro" id="IPR031157">
    <property type="entry name" value="G_TR_CS"/>
</dbReference>
<dbReference type="InterPro" id="IPR027417">
    <property type="entry name" value="P-loop_NTPase"/>
</dbReference>
<dbReference type="InterPro" id="IPR005225">
    <property type="entry name" value="Small_GTP-bd"/>
</dbReference>
<dbReference type="InterPro" id="IPR000795">
    <property type="entry name" value="T_Tr_GTP-bd_dom"/>
</dbReference>
<dbReference type="InterPro" id="IPR009000">
    <property type="entry name" value="Transl_B-barrel_sf"/>
</dbReference>
<dbReference type="InterPro" id="IPR009001">
    <property type="entry name" value="Transl_elong_EF1A/Init_IF2_C"/>
</dbReference>
<dbReference type="InterPro" id="IPR004541">
    <property type="entry name" value="Transl_elong_EFTu/EF1A_bac/org"/>
</dbReference>
<dbReference type="InterPro" id="IPR004160">
    <property type="entry name" value="Transl_elong_EFTu/EF1A_C"/>
</dbReference>
<dbReference type="NCBIfam" id="TIGR00485">
    <property type="entry name" value="EF-Tu"/>
    <property type="match status" value="1"/>
</dbReference>
<dbReference type="NCBIfam" id="NF000766">
    <property type="entry name" value="PRK00049.1"/>
    <property type="match status" value="1"/>
</dbReference>
<dbReference type="NCBIfam" id="NF009372">
    <property type="entry name" value="PRK12735.1"/>
    <property type="match status" value="1"/>
</dbReference>
<dbReference type="NCBIfam" id="NF009373">
    <property type="entry name" value="PRK12736.1"/>
    <property type="match status" value="1"/>
</dbReference>
<dbReference type="NCBIfam" id="TIGR00231">
    <property type="entry name" value="small_GTP"/>
    <property type="match status" value="1"/>
</dbReference>
<dbReference type="PANTHER" id="PTHR43721:SF22">
    <property type="entry name" value="ELONGATION FACTOR TU, MITOCHONDRIAL"/>
    <property type="match status" value="1"/>
</dbReference>
<dbReference type="PANTHER" id="PTHR43721">
    <property type="entry name" value="ELONGATION FACTOR TU-RELATED"/>
    <property type="match status" value="1"/>
</dbReference>
<dbReference type="Pfam" id="PF00009">
    <property type="entry name" value="GTP_EFTU"/>
    <property type="match status" value="1"/>
</dbReference>
<dbReference type="Pfam" id="PF03144">
    <property type="entry name" value="GTP_EFTU_D2"/>
    <property type="match status" value="1"/>
</dbReference>
<dbReference type="Pfam" id="PF03143">
    <property type="entry name" value="GTP_EFTU_D3"/>
    <property type="match status" value="1"/>
</dbReference>
<dbReference type="PRINTS" id="PR00315">
    <property type="entry name" value="ELONGATNFCT"/>
</dbReference>
<dbReference type="SUPFAM" id="SSF50465">
    <property type="entry name" value="EF-Tu/eEF-1alpha/eIF2-gamma C-terminal domain"/>
    <property type="match status" value="1"/>
</dbReference>
<dbReference type="SUPFAM" id="SSF52540">
    <property type="entry name" value="P-loop containing nucleoside triphosphate hydrolases"/>
    <property type="match status" value="1"/>
</dbReference>
<dbReference type="SUPFAM" id="SSF50447">
    <property type="entry name" value="Translation proteins"/>
    <property type="match status" value="1"/>
</dbReference>
<dbReference type="PROSITE" id="PS00301">
    <property type="entry name" value="G_TR_1"/>
    <property type="match status" value="1"/>
</dbReference>
<dbReference type="PROSITE" id="PS51722">
    <property type="entry name" value="G_TR_2"/>
    <property type="match status" value="1"/>
</dbReference>